<keyword id="KW-0028">Amino-acid biosynthesis</keyword>
<keyword id="KW-0170">Cobalt</keyword>
<keyword id="KW-0220">Diaminopimelate biosynthesis</keyword>
<keyword id="KW-0378">Hydrolase</keyword>
<keyword id="KW-0457">Lysine biosynthesis</keyword>
<keyword id="KW-0479">Metal-binding</keyword>
<keyword id="KW-0862">Zinc</keyword>
<name>DAPE_SULNB</name>
<reference key="1">
    <citation type="journal article" date="2007" name="Proc. Natl. Acad. Sci. U.S.A.">
        <title>Deep-sea vent epsilon-proteobacterial genomes provide insights into emergence of pathogens.</title>
        <authorList>
            <person name="Nakagawa S."/>
            <person name="Takaki Y."/>
            <person name="Shimamura S."/>
            <person name="Reysenbach A.-L."/>
            <person name="Takai K."/>
            <person name="Horikoshi K."/>
        </authorList>
    </citation>
    <scope>NUCLEOTIDE SEQUENCE [LARGE SCALE GENOMIC DNA]</scope>
    <source>
        <strain>NBC37-1</strain>
    </source>
</reference>
<organism>
    <name type="scientific">Sulfurovum sp. (strain NBC37-1)</name>
    <dbReference type="NCBI Taxonomy" id="387093"/>
    <lineage>
        <taxon>Bacteria</taxon>
        <taxon>Pseudomonadati</taxon>
        <taxon>Campylobacterota</taxon>
        <taxon>Epsilonproteobacteria</taxon>
        <taxon>Campylobacterales</taxon>
        <taxon>Sulfurovaceae</taxon>
        <taxon>Sulfurovum</taxon>
    </lineage>
</organism>
<accession>A6Q7J0</accession>
<evidence type="ECO:0000255" key="1">
    <source>
        <dbReference type="HAMAP-Rule" id="MF_01690"/>
    </source>
</evidence>
<proteinExistence type="inferred from homology"/>
<dbReference type="EC" id="3.5.1.18" evidence="1"/>
<dbReference type="EMBL" id="AP009179">
    <property type="protein sequence ID" value="BAF71449.1"/>
    <property type="molecule type" value="Genomic_DNA"/>
</dbReference>
<dbReference type="RefSeq" id="WP_011980182.1">
    <property type="nucleotide sequence ID" value="NC_009663.1"/>
</dbReference>
<dbReference type="SMR" id="A6Q7J0"/>
<dbReference type="STRING" id="387093.SUN_0489"/>
<dbReference type="KEGG" id="sun:SUN_0489"/>
<dbReference type="eggNOG" id="COG0624">
    <property type="taxonomic scope" value="Bacteria"/>
</dbReference>
<dbReference type="HOGENOM" id="CLU_021802_4_0_7"/>
<dbReference type="OrthoDB" id="5486471at2"/>
<dbReference type="UniPathway" id="UPA00034">
    <property type="reaction ID" value="UER00021"/>
</dbReference>
<dbReference type="Proteomes" id="UP000006378">
    <property type="component" value="Chromosome"/>
</dbReference>
<dbReference type="GO" id="GO:0008777">
    <property type="term" value="F:acetylornithine deacetylase activity"/>
    <property type="evidence" value="ECO:0007669"/>
    <property type="project" value="TreeGrafter"/>
</dbReference>
<dbReference type="GO" id="GO:0046872">
    <property type="term" value="F:metal ion binding"/>
    <property type="evidence" value="ECO:0007669"/>
    <property type="project" value="UniProtKB-KW"/>
</dbReference>
<dbReference type="GO" id="GO:0009014">
    <property type="term" value="F:succinyl-diaminopimelate desuccinylase activity"/>
    <property type="evidence" value="ECO:0007669"/>
    <property type="project" value="UniProtKB-EC"/>
</dbReference>
<dbReference type="GO" id="GO:0019877">
    <property type="term" value="P:diaminopimelate biosynthetic process"/>
    <property type="evidence" value="ECO:0007669"/>
    <property type="project" value="UniProtKB-KW"/>
</dbReference>
<dbReference type="GO" id="GO:0006526">
    <property type="term" value="P:L-arginine biosynthetic process"/>
    <property type="evidence" value="ECO:0007669"/>
    <property type="project" value="TreeGrafter"/>
</dbReference>
<dbReference type="GO" id="GO:0009089">
    <property type="term" value="P:lysine biosynthetic process via diaminopimelate"/>
    <property type="evidence" value="ECO:0007669"/>
    <property type="project" value="UniProtKB-UniPathway"/>
</dbReference>
<dbReference type="CDD" id="cd03891">
    <property type="entry name" value="M20_DapE_proteobac"/>
    <property type="match status" value="1"/>
</dbReference>
<dbReference type="Gene3D" id="1.10.150.900">
    <property type="match status" value="1"/>
</dbReference>
<dbReference type="Gene3D" id="3.30.70.360">
    <property type="match status" value="1"/>
</dbReference>
<dbReference type="Gene3D" id="3.40.630.10">
    <property type="entry name" value="Zn peptidases"/>
    <property type="match status" value="1"/>
</dbReference>
<dbReference type="HAMAP" id="MF_01690">
    <property type="entry name" value="DapE"/>
    <property type="match status" value="1"/>
</dbReference>
<dbReference type="InterPro" id="IPR001261">
    <property type="entry name" value="ArgE/DapE_CS"/>
</dbReference>
<dbReference type="InterPro" id="IPR036264">
    <property type="entry name" value="Bact_exopeptidase_dim_dom"/>
</dbReference>
<dbReference type="InterPro" id="IPR005941">
    <property type="entry name" value="DapE_proteobac"/>
</dbReference>
<dbReference type="InterPro" id="IPR002933">
    <property type="entry name" value="Peptidase_M20"/>
</dbReference>
<dbReference type="InterPro" id="IPR011650">
    <property type="entry name" value="Peptidase_M20_dimer"/>
</dbReference>
<dbReference type="InterPro" id="IPR050072">
    <property type="entry name" value="Peptidase_M20A"/>
</dbReference>
<dbReference type="NCBIfam" id="TIGR01246">
    <property type="entry name" value="dapE_proteo"/>
    <property type="match status" value="1"/>
</dbReference>
<dbReference type="NCBIfam" id="NF009557">
    <property type="entry name" value="PRK13009.1"/>
    <property type="match status" value="1"/>
</dbReference>
<dbReference type="PANTHER" id="PTHR43808">
    <property type="entry name" value="ACETYLORNITHINE DEACETYLASE"/>
    <property type="match status" value="1"/>
</dbReference>
<dbReference type="PANTHER" id="PTHR43808:SF31">
    <property type="entry name" value="N-ACETYL-L-CITRULLINE DEACETYLASE"/>
    <property type="match status" value="1"/>
</dbReference>
<dbReference type="Pfam" id="PF07687">
    <property type="entry name" value="M20_dimer"/>
    <property type="match status" value="1"/>
</dbReference>
<dbReference type="Pfam" id="PF01546">
    <property type="entry name" value="Peptidase_M20"/>
    <property type="match status" value="1"/>
</dbReference>
<dbReference type="SUPFAM" id="SSF55031">
    <property type="entry name" value="Bacterial exopeptidase dimerisation domain"/>
    <property type="match status" value="1"/>
</dbReference>
<dbReference type="SUPFAM" id="SSF53187">
    <property type="entry name" value="Zn-dependent exopeptidases"/>
    <property type="match status" value="1"/>
</dbReference>
<dbReference type="PROSITE" id="PS00759">
    <property type="entry name" value="ARGE_DAPE_CPG2_2"/>
    <property type="match status" value="1"/>
</dbReference>
<protein>
    <recommendedName>
        <fullName evidence="1">Succinyl-diaminopimelate desuccinylase</fullName>
        <shortName evidence="1">SDAP desuccinylase</shortName>
        <ecNumber evidence="1">3.5.1.18</ecNumber>
    </recommendedName>
    <alternativeName>
        <fullName evidence="1">N-succinyl-LL-2,6-diaminoheptanedioate amidohydrolase</fullName>
    </alternativeName>
</protein>
<feature type="chain" id="PRO_0000375760" description="Succinyl-diaminopimelate desuccinylase">
    <location>
        <begin position="1"/>
        <end position="367"/>
    </location>
</feature>
<feature type="active site" evidence="1">
    <location>
        <position position="66"/>
    </location>
</feature>
<feature type="active site" description="Proton acceptor" evidence="1">
    <location>
        <position position="125"/>
    </location>
</feature>
<feature type="binding site" evidence="1">
    <location>
        <position position="64"/>
    </location>
    <ligand>
        <name>Zn(2+)</name>
        <dbReference type="ChEBI" id="CHEBI:29105"/>
        <label>1</label>
    </ligand>
</feature>
<feature type="binding site" evidence="1">
    <location>
        <position position="95"/>
    </location>
    <ligand>
        <name>Zn(2+)</name>
        <dbReference type="ChEBI" id="CHEBI:29105"/>
        <label>1</label>
    </ligand>
</feature>
<feature type="binding site" evidence="1">
    <location>
        <position position="95"/>
    </location>
    <ligand>
        <name>Zn(2+)</name>
        <dbReference type="ChEBI" id="CHEBI:29105"/>
        <label>2</label>
    </ligand>
</feature>
<feature type="binding site" evidence="1">
    <location>
        <position position="126"/>
    </location>
    <ligand>
        <name>Zn(2+)</name>
        <dbReference type="ChEBI" id="CHEBI:29105"/>
        <label>2</label>
    </ligand>
</feature>
<feature type="binding site" evidence="1">
    <location>
        <position position="154"/>
    </location>
    <ligand>
        <name>Zn(2+)</name>
        <dbReference type="ChEBI" id="CHEBI:29105"/>
        <label>1</label>
    </ligand>
</feature>
<feature type="binding site" evidence="1">
    <location>
        <position position="339"/>
    </location>
    <ligand>
        <name>Zn(2+)</name>
        <dbReference type="ChEBI" id="CHEBI:29105"/>
        <label>2</label>
    </ligand>
</feature>
<comment type="function">
    <text evidence="1">Catalyzes the hydrolysis of N-succinyl-L,L-diaminopimelic acid (SDAP), forming succinate and LL-2,6-diaminopimelate (DAP), an intermediate involved in the bacterial biosynthesis of lysine and meso-diaminopimelic acid, an essential component of bacterial cell walls.</text>
</comment>
<comment type="catalytic activity">
    <reaction evidence="1">
        <text>N-succinyl-(2S,6S)-2,6-diaminopimelate + H2O = (2S,6S)-2,6-diaminopimelate + succinate</text>
        <dbReference type="Rhea" id="RHEA:22608"/>
        <dbReference type="ChEBI" id="CHEBI:15377"/>
        <dbReference type="ChEBI" id="CHEBI:30031"/>
        <dbReference type="ChEBI" id="CHEBI:57609"/>
        <dbReference type="ChEBI" id="CHEBI:58087"/>
        <dbReference type="EC" id="3.5.1.18"/>
    </reaction>
</comment>
<comment type="cofactor">
    <cofactor evidence="1">
        <name>Zn(2+)</name>
        <dbReference type="ChEBI" id="CHEBI:29105"/>
    </cofactor>
    <cofactor evidence="1">
        <name>Co(2+)</name>
        <dbReference type="ChEBI" id="CHEBI:48828"/>
    </cofactor>
    <text evidence="1">Binds 2 Zn(2+) or Co(2+) ions per subunit.</text>
</comment>
<comment type="pathway">
    <text evidence="1">Amino-acid biosynthesis; L-lysine biosynthesis via DAP pathway; LL-2,6-diaminopimelate from (S)-tetrahydrodipicolinate (succinylase route): step 3/3.</text>
</comment>
<comment type="subunit">
    <text evidence="1">Homodimer.</text>
</comment>
<comment type="similarity">
    <text evidence="1">Belongs to the peptidase M20A family. DapE subfamily.</text>
</comment>
<gene>
    <name evidence="1" type="primary">dapE</name>
    <name type="ordered locus">SUN_0489</name>
</gene>
<sequence length="367" mass="40321">MNVVDLLMKLLSFKSVTPDDAGSLAFIESYLKGYEATYVNKEGVKNLFLTKKFSEGPHLCFAGHVDVVPAGDGWHTNPFVPVIKEGKIYARGTQDMKSGVAAFVQAVKECEDFSGRLSILLTSDEEGDATYGTQIMLQHLKEIDLLPDACIVAEPTCETAFGDAIKVGRRGSVNGVIEKHGIQGHAAYPEKAKNPIHKVAQVLPMMAGVNLDEGDEFFGPSQFVITDLRAGMEVTNVTPGKLKMMFNVRNSTETTLEDVEKFVHTYFNGMDYDLTLKQSATPFLTDPDRPIVHALDESIQKVCGITPKHSTAGGTSDARFIAADNIDVIEFGVINDTIHAPNERTSIEEVEKLYEVFKETIKYFTQG</sequence>